<keyword id="KW-0030">Aminoacyl-tRNA synthetase</keyword>
<keyword id="KW-0067">ATP-binding</keyword>
<keyword id="KW-0963">Cytoplasm</keyword>
<keyword id="KW-0436">Ligase</keyword>
<keyword id="KW-0460">Magnesium</keyword>
<keyword id="KW-0479">Metal-binding</keyword>
<keyword id="KW-0547">Nucleotide-binding</keyword>
<keyword id="KW-0648">Protein biosynthesis</keyword>
<dbReference type="EC" id="6.1.1.20" evidence="1"/>
<dbReference type="EMBL" id="CP000736">
    <property type="protein sequence ID" value="ABR52073.1"/>
    <property type="molecule type" value="Genomic_DNA"/>
</dbReference>
<dbReference type="SMR" id="A6U0V5"/>
<dbReference type="KEGG" id="sah:SaurJH1_1219"/>
<dbReference type="HOGENOM" id="CLU_025086_0_1_9"/>
<dbReference type="GO" id="GO:0005737">
    <property type="term" value="C:cytoplasm"/>
    <property type="evidence" value="ECO:0007669"/>
    <property type="project" value="UniProtKB-SubCell"/>
</dbReference>
<dbReference type="GO" id="GO:0005524">
    <property type="term" value="F:ATP binding"/>
    <property type="evidence" value="ECO:0007669"/>
    <property type="project" value="UniProtKB-UniRule"/>
</dbReference>
<dbReference type="GO" id="GO:0140096">
    <property type="term" value="F:catalytic activity, acting on a protein"/>
    <property type="evidence" value="ECO:0007669"/>
    <property type="project" value="UniProtKB-ARBA"/>
</dbReference>
<dbReference type="GO" id="GO:0000287">
    <property type="term" value="F:magnesium ion binding"/>
    <property type="evidence" value="ECO:0007669"/>
    <property type="project" value="UniProtKB-UniRule"/>
</dbReference>
<dbReference type="GO" id="GO:0004826">
    <property type="term" value="F:phenylalanine-tRNA ligase activity"/>
    <property type="evidence" value="ECO:0007669"/>
    <property type="project" value="UniProtKB-UniRule"/>
</dbReference>
<dbReference type="GO" id="GO:0016740">
    <property type="term" value="F:transferase activity"/>
    <property type="evidence" value="ECO:0007669"/>
    <property type="project" value="UniProtKB-ARBA"/>
</dbReference>
<dbReference type="GO" id="GO:0000049">
    <property type="term" value="F:tRNA binding"/>
    <property type="evidence" value="ECO:0007669"/>
    <property type="project" value="InterPro"/>
</dbReference>
<dbReference type="GO" id="GO:0006432">
    <property type="term" value="P:phenylalanyl-tRNA aminoacylation"/>
    <property type="evidence" value="ECO:0007669"/>
    <property type="project" value="UniProtKB-UniRule"/>
</dbReference>
<dbReference type="CDD" id="cd00496">
    <property type="entry name" value="PheRS_alpha_core"/>
    <property type="match status" value="1"/>
</dbReference>
<dbReference type="FunFam" id="3.30.930.10:FF:000003">
    <property type="entry name" value="Phenylalanine--tRNA ligase alpha subunit"/>
    <property type="match status" value="1"/>
</dbReference>
<dbReference type="Gene3D" id="3.30.930.10">
    <property type="entry name" value="Bira Bifunctional Protein, Domain 2"/>
    <property type="match status" value="1"/>
</dbReference>
<dbReference type="HAMAP" id="MF_00281">
    <property type="entry name" value="Phe_tRNA_synth_alpha1"/>
    <property type="match status" value="1"/>
</dbReference>
<dbReference type="InterPro" id="IPR006195">
    <property type="entry name" value="aa-tRNA-synth_II"/>
</dbReference>
<dbReference type="InterPro" id="IPR045864">
    <property type="entry name" value="aa-tRNA-synth_II/BPL/LPL"/>
</dbReference>
<dbReference type="InterPro" id="IPR004529">
    <property type="entry name" value="Phe-tRNA-synth_IIc_asu"/>
</dbReference>
<dbReference type="InterPro" id="IPR004188">
    <property type="entry name" value="Phe-tRNA_ligase_II_N"/>
</dbReference>
<dbReference type="InterPro" id="IPR022911">
    <property type="entry name" value="Phe_tRNA_ligase_alpha1_bac"/>
</dbReference>
<dbReference type="InterPro" id="IPR002319">
    <property type="entry name" value="Phenylalanyl-tRNA_Synthase"/>
</dbReference>
<dbReference type="InterPro" id="IPR010978">
    <property type="entry name" value="tRNA-bd_arm"/>
</dbReference>
<dbReference type="NCBIfam" id="TIGR00468">
    <property type="entry name" value="pheS"/>
    <property type="match status" value="1"/>
</dbReference>
<dbReference type="PANTHER" id="PTHR11538:SF41">
    <property type="entry name" value="PHENYLALANINE--TRNA LIGASE, MITOCHONDRIAL"/>
    <property type="match status" value="1"/>
</dbReference>
<dbReference type="PANTHER" id="PTHR11538">
    <property type="entry name" value="PHENYLALANYL-TRNA SYNTHETASE"/>
    <property type="match status" value="1"/>
</dbReference>
<dbReference type="Pfam" id="PF02912">
    <property type="entry name" value="Phe_tRNA-synt_N"/>
    <property type="match status" value="1"/>
</dbReference>
<dbReference type="Pfam" id="PF01409">
    <property type="entry name" value="tRNA-synt_2d"/>
    <property type="match status" value="1"/>
</dbReference>
<dbReference type="SUPFAM" id="SSF55681">
    <property type="entry name" value="Class II aaRS and biotin synthetases"/>
    <property type="match status" value="1"/>
</dbReference>
<dbReference type="SUPFAM" id="SSF46589">
    <property type="entry name" value="tRNA-binding arm"/>
    <property type="match status" value="1"/>
</dbReference>
<dbReference type="PROSITE" id="PS50862">
    <property type="entry name" value="AA_TRNA_LIGASE_II"/>
    <property type="match status" value="1"/>
</dbReference>
<protein>
    <recommendedName>
        <fullName evidence="1">Phenylalanine--tRNA ligase alpha subunit</fullName>
        <ecNumber evidence="1">6.1.1.20</ecNumber>
    </recommendedName>
    <alternativeName>
        <fullName evidence="1">Phenylalanyl-tRNA synthetase alpha subunit</fullName>
        <shortName evidence="1">PheRS</shortName>
    </alternativeName>
</protein>
<organism>
    <name type="scientific">Staphylococcus aureus (strain JH1)</name>
    <dbReference type="NCBI Taxonomy" id="359787"/>
    <lineage>
        <taxon>Bacteria</taxon>
        <taxon>Bacillati</taxon>
        <taxon>Bacillota</taxon>
        <taxon>Bacilli</taxon>
        <taxon>Bacillales</taxon>
        <taxon>Staphylococcaceae</taxon>
        <taxon>Staphylococcus</taxon>
    </lineage>
</organism>
<accession>A6U0V5</accession>
<sequence length="352" mass="40121">MSEQQTMSELKQQALVDINEANDERALQEVKVKYLGKKGSVSGLMKLMKDLPNEEKPAFGQKVNELRQTIQNELDERQQMLVKEKLNKQLAEETIDVSLPGRHIEIGSKHPLTRTIEEIEDLFLGLGYEIVNGYEVEQDHYNFEMLNLPKSHPARDMQDSFYITDEILLRTHTSPVQARTMESRHGQGPVKIICPGKVYRRDSDDATHSHQFTQIEGLVVDKNVKMSDLKGTLELLAKKLFGADREIRLRPSYFPFTEPSVEVDVSCFKCKGKGCNVCKHTGWIEILGAGMVHPNVLEMAGFDSSEYSGFAFGMGPDRIAMLKYGIEDIRHFYTNDVRFLDQFKAVEDRGDM</sequence>
<feature type="chain" id="PRO_1000078851" description="Phenylalanine--tRNA ligase alpha subunit">
    <location>
        <begin position="1"/>
        <end position="352"/>
    </location>
</feature>
<feature type="binding site" evidence="1">
    <location>
        <position position="258"/>
    </location>
    <ligand>
        <name>Mg(2+)</name>
        <dbReference type="ChEBI" id="CHEBI:18420"/>
        <note>shared with beta subunit</note>
    </ligand>
</feature>
<comment type="catalytic activity">
    <reaction evidence="1">
        <text>tRNA(Phe) + L-phenylalanine + ATP = L-phenylalanyl-tRNA(Phe) + AMP + diphosphate + H(+)</text>
        <dbReference type="Rhea" id="RHEA:19413"/>
        <dbReference type="Rhea" id="RHEA-COMP:9668"/>
        <dbReference type="Rhea" id="RHEA-COMP:9699"/>
        <dbReference type="ChEBI" id="CHEBI:15378"/>
        <dbReference type="ChEBI" id="CHEBI:30616"/>
        <dbReference type="ChEBI" id="CHEBI:33019"/>
        <dbReference type="ChEBI" id="CHEBI:58095"/>
        <dbReference type="ChEBI" id="CHEBI:78442"/>
        <dbReference type="ChEBI" id="CHEBI:78531"/>
        <dbReference type="ChEBI" id="CHEBI:456215"/>
        <dbReference type="EC" id="6.1.1.20"/>
    </reaction>
</comment>
<comment type="cofactor">
    <cofactor evidence="1">
        <name>Mg(2+)</name>
        <dbReference type="ChEBI" id="CHEBI:18420"/>
    </cofactor>
    <text evidence="1">Binds 2 magnesium ions per tetramer.</text>
</comment>
<comment type="subunit">
    <text evidence="1">Tetramer of two alpha and two beta subunits.</text>
</comment>
<comment type="subcellular location">
    <subcellularLocation>
        <location evidence="1">Cytoplasm</location>
    </subcellularLocation>
</comment>
<comment type="similarity">
    <text evidence="1">Belongs to the class-II aminoacyl-tRNA synthetase family. Phe-tRNA synthetase alpha subunit type 1 subfamily.</text>
</comment>
<proteinExistence type="inferred from homology"/>
<reference key="1">
    <citation type="submission" date="2007-06" db="EMBL/GenBank/DDBJ databases">
        <title>Complete sequence of chromosome of Staphylococcus aureus subsp. aureus JH1.</title>
        <authorList>
            <consortium name="US DOE Joint Genome Institute"/>
            <person name="Copeland A."/>
            <person name="Lucas S."/>
            <person name="Lapidus A."/>
            <person name="Barry K."/>
            <person name="Detter J.C."/>
            <person name="Glavina del Rio T."/>
            <person name="Hammon N."/>
            <person name="Israni S."/>
            <person name="Dalin E."/>
            <person name="Tice H."/>
            <person name="Pitluck S."/>
            <person name="Chain P."/>
            <person name="Malfatti S."/>
            <person name="Shin M."/>
            <person name="Vergez L."/>
            <person name="Schmutz J."/>
            <person name="Larimer F."/>
            <person name="Land M."/>
            <person name="Hauser L."/>
            <person name="Kyrpides N."/>
            <person name="Ivanova N."/>
            <person name="Tomasz A."/>
            <person name="Richardson P."/>
        </authorList>
    </citation>
    <scope>NUCLEOTIDE SEQUENCE [LARGE SCALE GENOMIC DNA]</scope>
    <source>
        <strain>JH1</strain>
    </source>
</reference>
<gene>
    <name evidence="1" type="primary">pheS</name>
    <name type="ordered locus">SaurJH1_1219</name>
</gene>
<evidence type="ECO:0000255" key="1">
    <source>
        <dbReference type="HAMAP-Rule" id="MF_00281"/>
    </source>
</evidence>
<name>SYFA_STAA2</name>